<evidence type="ECO:0000255" key="1">
    <source>
        <dbReference type="HAMAP-Rule" id="MF_01448"/>
    </source>
</evidence>
<gene>
    <name type="ordered locus">RBAM_024480</name>
</gene>
<feature type="chain" id="PRO_1000087499" description="UPF0473 protein RBAM_024480">
    <location>
        <begin position="1"/>
        <end position="93"/>
    </location>
</feature>
<comment type="similarity">
    <text evidence="1">Belongs to the UPF0473 family.</text>
</comment>
<organism>
    <name type="scientific">Bacillus velezensis (strain DSM 23117 / BGSC 10A6 / LMG 26770 / FZB42)</name>
    <name type="common">Bacillus amyloliquefaciens subsp. plantarum</name>
    <dbReference type="NCBI Taxonomy" id="326423"/>
    <lineage>
        <taxon>Bacteria</taxon>
        <taxon>Bacillati</taxon>
        <taxon>Bacillota</taxon>
        <taxon>Bacilli</taxon>
        <taxon>Bacillales</taxon>
        <taxon>Bacillaceae</taxon>
        <taxon>Bacillus</taxon>
        <taxon>Bacillus amyloliquefaciens group</taxon>
    </lineage>
</organism>
<name>Y2448_BACVZ</name>
<sequence>MEHGEKHITIVDDQGNEQLCEVLFTFENDTFNKSYVLYYPIDAQDDDEIEIHASSFEPNENGEDGELMPIETDEEWEMIEETLNTFLAEEDEE</sequence>
<proteinExistence type="inferred from homology"/>
<dbReference type="EMBL" id="CP000560">
    <property type="protein sequence ID" value="ABS74808.1"/>
    <property type="molecule type" value="Genomic_DNA"/>
</dbReference>
<dbReference type="RefSeq" id="WP_003152751.1">
    <property type="nucleotide sequence ID" value="NC_009725.2"/>
</dbReference>
<dbReference type="GeneID" id="93081588"/>
<dbReference type="KEGG" id="bay:RBAM_024480"/>
<dbReference type="HOGENOM" id="CLU_146610_2_1_9"/>
<dbReference type="Proteomes" id="UP000001120">
    <property type="component" value="Chromosome"/>
</dbReference>
<dbReference type="HAMAP" id="MF_01448">
    <property type="entry name" value="UPF0473"/>
    <property type="match status" value="1"/>
</dbReference>
<dbReference type="InterPro" id="IPR009711">
    <property type="entry name" value="UPF0473"/>
</dbReference>
<dbReference type="NCBIfam" id="NF010217">
    <property type="entry name" value="PRK13678.1-4"/>
    <property type="match status" value="1"/>
</dbReference>
<dbReference type="NCBIfam" id="NF010219">
    <property type="entry name" value="PRK13678.2-2"/>
    <property type="match status" value="1"/>
</dbReference>
<dbReference type="NCBIfam" id="NF010221">
    <property type="entry name" value="PRK13678.2-4"/>
    <property type="match status" value="1"/>
</dbReference>
<dbReference type="PANTHER" id="PTHR40066">
    <property type="entry name" value="UPF0473 PROTEIN CBO2561/CLC_2432"/>
    <property type="match status" value="1"/>
</dbReference>
<dbReference type="PANTHER" id="PTHR40066:SF1">
    <property type="entry name" value="UPF0473 PROTEIN CBO2561_CLC_2432"/>
    <property type="match status" value="1"/>
</dbReference>
<dbReference type="Pfam" id="PF06949">
    <property type="entry name" value="DUF1292"/>
    <property type="match status" value="1"/>
</dbReference>
<reference key="1">
    <citation type="journal article" date="2007" name="Nat. Biotechnol.">
        <title>Comparative analysis of the complete genome sequence of the plant growth-promoting bacterium Bacillus amyloliquefaciens FZB42.</title>
        <authorList>
            <person name="Chen X.H."/>
            <person name="Koumoutsi A."/>
            <person name="Scholz R."/>
            <person name="Eisenreich A."/>
            <person name="Schneider K."/>
            <person name="Heinemeyer I."/>
            <person name="Morgenstern B."/>
            <person name="Voss B."/>
            <person name="Hess W.R."/>
            <person name="Reva O."/>
            <person name="Junge H."/>
            <person name="Voigt B."/>
            <person name="Jungblut P.R."/>
            <person name="Vater J."/>
            <person name="Suessmuth R."/>
            <person name="Liesegang H."/>
            <person name="Strittmatter A."/>
            <person name="Gottschalk G."/>
            <person name="Borriss R."/>
        </authorList>
    </citation>
    <scope>NUCLEOTIDE SEQUENCE [LARGE SCALE GENOMIC DNA]</scope>
    <source>
        <strain>DSM 23117 / BGSC 10A6 / LMG 26770 / FZB42</strain>
    </source>
</reference>
<protein>
    <recommendedName>
        <fullName evidence="1">UPF0473 protein RBAM_024480</fullName>
    </recommendedName>
</protein>
<accession>A7Z732</accession>